<feature type="chain" id="PRO_1000118632" description="Recombination-associated protein RdgC">
    <location>
        <begin position="1"/>
        <end position="306"/>
    </location>
</feature>
<evidence type="ECO:0000255" key="1">
    <source>
        <dbReference type="HAMAP-Rule" id="MF_00194"/>
    </source>
</evidence>
<gene>
    <name evidence="1" type="primary">rdgC</name>
    <name type="ordered locus">PLES_18041</name>
</gene>
<protein>
    <recommendedName>
        <fullName evidence="1">Recombination-associated protein RdgC</fullName>
    </recommendedName>
</protein>
<name>RDGC_PSEA8</name>
<reference key="1">
    <citation type="journal article" date="2009" name="Genome Res.">
        <title>Newly introduced genomic prophage islands are critical determinants of in vivo competitiveness in the Liverpool epidemic strain of Pseudomonas aeruginosa.</title>
        <authorList>
            <person name="Winstanley C."/>
            <person name="Langille M.G.I."/>
            <person name="Fothergill J.L."/>
            <person name="Kukavica-Ibrulj I."/>
            <person name="Paradis-Bleau C."/>
            <person name="Sanschagrin F."/>
            <person name="Thomson N.R."/>
            <person name="Winsor G.L."/>
            <person name="Quail M.A."/>
            <person name="Lennard N."/>
            <person name="Bignell A."/>
            <person name="Clarke L."/>
            <person name="Seeger K."/>
            <person name="Saunders D."/>
            <person name="Harris D."/>
            <person name="Parkhill J."/>
            <person name="Hancock R.E.W."/>
            <person name="Brinkman F.S.L."/>
            <person name="Levesque R.C."/>
        </authorList>
    </citation>
    <scope>NUCLEOTIDE SEQUENCE [LARGE SCALE GENOMIC DNA]</scope>
    <source>
        <strain>LESB58</strain>
    </source>
</reference>
<dbReference type="EMBL" id="FM209186">
    <property type="protein sequence ID" value="CAW26532.1"/>
    <property type="molecule type" value="Genomic_DNA"/>
</dbReference>
<dbReference type="RefSeq" id="WP_003091601.1">
    <property type="nucleotide sequence ID" value="NC_011770.1"/>
</dbReference>
<dbReference type="SMR" id="B7V7J4"/>
<dbReference type="KEGG" id="pag:PLES_18041"/>
<dbReference type="HOGENOM" id="CLU_052038_1_1_6"/>
<dbReference type="GO" id="GO:0043590">
    <property type="term" value="C:bacterial nucleoid"/>
    <property type="evidence" value="ECO:0007669"/>
    <property type="project" value="TreeGrafter"/>
</dbReference>
<dbReference type="GO" id="GO:0005737">
    <property type="term" value="C:cytoplasm"/>
    <property type="evidence" value="ECO:0007669"/>
    <property type="project" value="UniProtKB-UniRule"/>
</dbReference>
<dbReference type="GO" id="GO:0003690">
    <property type="term" value="F:double-stranded DNA binding"/>
    <property type="evidence" value="ECO:0007669"/>
    <property type="project" value="TreeGrafter"/>
</dbReference>
<dbReference type="GO" id="GO:0006310">
    <property type="term" value="P:DNA recombination"/>
    <property type="evidence" value="ECO:0007669"/>
    <property type="project" value="UniProtKB-UniRule"/>
</dbReference>
<dbReference type="GO" id="GO:0000018">
    <property type="term" value="P:regulation of DNA recombination"/>
    <property type="evidence" value="ECO:0007669"/>
    <property type="project" value="TreeGrafter"/>
</dbReference>
<dbReference type="HAMAP" id="MF_00194">
    <property type="entry name" value="RdgC"/>
    <property type="match status" value="1"/>
</dbReference>
<dbReference type="InterPro" id="IPR007476">
    <property type="entry name" value="RdgC"/>
</dbReference>
<dbReference type="NCBIfam" id="NF001461">
    <property type="entry name" value="PRK00321.1-2"/>
    <property type="match status" value="1"/>
</dbReference>
<dbReference type="NCBIfam" id="NF001462">
    <property type="entry name" value="PRK00321.1-3"/>
    <property type="match status" value="1"/>
</dbReference>
<dbReference type="NCBIfam" id="NF001464">
    <property type="entry name" value="PRK00321.1-5"/>
    <property type="match status" value="1"/>
</dbReference>
<dbReference type="PANTHER" id="PTHR38103">
    <property type="entry name" value="RECOMBINATION-ASSOCIATED PROTEIN RDGC"/>
    <property type="match status" value="1"/>
</dbReference>
<dbReference type="PANTHER" id="PTHR38103:SF1">
    <property type="entry name" value="RECOMBINATION-ASSOCIATED PROTEIN RDGC"/>
    <property type="match status" value="1"/>
</dbReference>
<dbReference type="Pfam" id="PF04381">
    <property type="entry name" value="RdgC"/>
    <property type="match status" value="1"/>
</dbReference>
<comment type="function">
    <text evidence="1">May be involved in recombination.</text>
</comment>
<comment type="subcellular location">
    <subcellularLocation>
        <location evidence="1">Cytoplasm</location>
        <location evidence="1">Nucleoid</location>
    </subcellularLocation>
</comment>
<comment type="similarity">
    <text evidence="1">Belongs to the RdgC family.</text>
</comment>
<organism>
    <name type="scientific">Pseudomonas aeruginosa (strain LESB58)</name>
    <dbReference type="NCBI Taxonomy" id="557722"/>
    <lineage>
        <taxon>Bacteria</taxon>
        <taxon>Pseudomonadati</taxon>
        <taxon>Pseudomonadota</taxon>
        <taxon>Gammaproteobacteria</taxon>
        <taxon>Pseudomonadales</taxon>
        <taxon>Pseudomonadaceae</taxon>
        <taxon>Pseudomonas</taxon>
    </lineage>
</organism>
<sequence>MWFRNLLVYRLTQDLQLDADSLEKALGEKPARPCASQELTTYGFTAPFGKGPDAPLVHVSQDFFLISARKEERILPGSVVRDALKEKVDEIEAQQMRKVYKKERDQLKDEIVQTLLPRAFIRRSSTFAAIAPSLGLILVDSASAKKAEDLLSTLREALGSLPVRPLSVKVAPTATLTDWVKTQEAAGDFHVLDECELRDTHEDGGVVRCKRQDLTSEEIQLHLTAGKLVTQLSLAWSDKLSFVLDDKLAVKRLRFEDLLQEQAEKDGGEDALGQLDASFTLMMLTFAEFLPALFEALGGEEIPQGV</sequence>
<accession>B7V7J4</accession>
<keyword id="KW-0963">Cytoplasm</keyword>
<keyword id="KW-0233">DNA recombination</keyword>
<proteinExistence type="inferred from homology"/>